<organism>
    <name type="scientific">Brevibacillus choshinensis</name>
    <dbReference type="NCBI Taxonomy" id="54911"/>
    <lineage>
        <taxon>Bacteria</taxon>
        <taxon>Bacillati</taxon>
        <taxon>Bacillota</taxon>
        <taxon>Bacilli</taxon>
        <taxon>Bacillales</taxon>
        <taxon>Paenibacillaceae</taxon>
        <taxon>Brevibacillus</taxon>
    </lineage>
</organism>
<sequence>MLKPLGDRVVIEAISKDEMTASGIVLPDSAKEKPQEGRVIAVGSGRVADNGERIALEVKDGDKVIFSKYAGTEVKVDNKEYLVLRESDILAIIG</sequence>
<accession>Q8RU01</accession>
<keyword id="KW-0143">Chaperone</keyword>
<keyword id="KW-0963">Cytoplasm</keyword>
<evidence type="ECO:0000255" key="1">
    <source>
        <dbReference type="HAMAP-Rule" id="MF_00580"/>
    </source>
</evidence>
<feature type="chain" id="PRO_0000174708" description="Co-chaperonin GroES">
    <location>
        <begin position="1"/>
        <end position="94"/>
    </location>
</feature>
<proteinExistence type="inferred from homology"/>
<reference key="1">
    <citation type="journal article" date="2001" name="Biosci. Biotechnol. Biochem.">
        <title>Molecular cloning of groESL locus, and purification and characterization of chaperonins, GroEL and GroES, from Bacillus brevis.</title>
        <authorList>
            <person name="Tokunaga M."/>
            <person name="Shiraishi Y."/>
            <person name="Odachi M."/>
            <person name="Mizukami M."/>
            <person name="Tokunaga H."/>
            <person name="Philo J.S."/>
            <person name="Arakawa T."/>
            <person name="Ishibashi M."/>
            <person name="Tanaka R."/>
            <person name="Takagi H."/>
        </authorList>
    </citation>
    <scope>NUCLEOTIDE SEQUENCE [GENOMIC DNA]</scope>
    <source>
        <strain>HPD31</strain>
    </source>
</reference>
<gene>
    <name evidence="1" type="primary">groES</name>
    <name evidence="1" type="synonym">groS</name>
</gene>
<name>CH10_BRECH</name>
<dbReference type="EMBL" id="AB038650">
    <property type="protein sequence ID" value="BAB85115.1"/>
    <property type="molecule type" value="Genomic_DNA"/>
</dbReference>
<dbReference type="SMR" id="Q8RU01"/>
<dbReference type="STRING" id="54911.AN963_28440"/>
<dbReference type="GO" id="GO:0005737">
    <property type="term" value="C:cytoplasm"/>
    <property type="evidence" value="ECO:0007669"/>
    <property type="project" value="UniProtKB-SubCell"/>
</dbReference>
<dbReference type="GO" id="GO:0005524">
    <property type="term" value="F:ATP binding"/>
    <property type="evidence" value="ECO:0007669"/>
    <property type="project" value="InterPro"/>
</dbReference>
<dbReference type="GO" id="GO:0046872">
    <property type="term" value="F:metal ion binding"/>
    <property type="evidence" value="ECO:0007669"/>
    <property type="project" value="TreeGrafter"/>
</dbReference>
<dbReference type="GO" id="GO:0044183">
    <property type="term" value="F:protein folding chaperone"/>
    <property type="evidence" value="ECO:0007669"/>
    <property type="project" value="InterPro"/>
</dbReference>
<dbReference type="GO" id="GO:0051087">
    <property type="term" value="F:protein-folding chaperone binding"/>
    <property type="evidence" value="ECO:0007669"/>
    <property type="project" value="TreeGrafter"/>
</dbReference>
<dbReference type="GO" id="GO:0051082">
    <property type="term" value="F:unfolded protein binding"/>
    <property type="evidence" value="ECO:0007669"/>
    <property type="project" value="TreeGrafter"/>
</dbReference>
<dbReference type="GO" id="GO:0051085">
    <property type="term" value="P:chaperone cofactor-dependent protein refolding"/>
    <property type="evidence" value="ECO:0007669"/>
    <property type="project" value="TreeGrafter"/>
</dbReference>
<dbReference type="CDD" id="cd00320">
    <property type="entry name" value="cpn10"/>
    <property type="match status" value="1"/>
</dbReference>
<dbReference type="FunFam" id="2.30.33.40:FF:000001">
    <property type="entry name" value="10 kDa chaperonin"/>
    <property type="match status" value="1"/>
</dbReference>
<dbReference type="Gene3D" id="2.30.33.40">
    <property type="entry name" value="GroES chaperonin"/>
    <property type="match status" value="1"/>
</dbReference>
<dbReference type="HAMAP" id="MF_00580">
    <property type="entry name" value="CH10"/>
    <property type="match status" value="1"/>
</dbReference>
<dbReference type="InterPro" id="IPR020818">
    <property type="entry name" value="Chaperonin_GroES"/>
</dbReference>
<dbReference type="InterPro" id="IPR037124">
    <property type="entry name" value="Chaperonin_GroES_sf"/>
</dbReference>
<dbReference type="InterPro" id="IPR018369">
    <property type="entry name" value="Chaprnonin_Cpn10_CS"/>
</dbReference>
<dbReference type="InterPro" id="IPR011032">
    <property type="entry name" value="GroES-like_sf"/>
</dbReference>
<dbReference type="NCBIfam" id="NF001527">
    <property type="entry name" value="PRK00364.1-2"/>
    <property type="match status" value="1"/>
</dbReference>
<dbReference type="NCBIfam" id="NF001530">
    <property type="entry name" value="PRK00364.1-6"/>
    <property type="match status" value="1"/>
</dbReference>
<dbReference type="NCBIfam" id="NF001531">
    <property type="entry name" value="PRK00364.2-2"/>
    <property type="match status" value="1"/>
</dbReference>
<dbReference type="NCBIfam" id="NF001532">
    <property type="entry name" value="PRK00364.2-3"/>
    <property type="match status" value="1"/>
</dbReference>
<dbReference type="NCBIfam" id="NF001533">
    <property type="entry name" value="PRK00364.2-4"/>
    <property type="match status" value="1"/>
</dbReference>
<dbReference type="NCBIfam" id="NF001534">
    <property type="entry name" value="PRK00364.2-5"/>
    <property type="match status" value="1"/>
</dbReference>
<dbReference type="PANTHER" id="PTHR10772">
    <property type="entry name" value="10 KDA HEAT SHOCK PROTEIN"/>
    <property type="match status" value="1"/>
</dbReference>
<dbReference type="PANTHER" id="PTHR10772:SF58">
    <property type="entry name" value="CO-CHAPERONIN GROES"/>
    <property type="match status" value="1"/>
</dbReference>
<dbReference type="Pfam" id="PF00166">
    <property type="entry name" value="Cpn10"/>
    <property type="match status" value="1"/>
</dbReference>
<dbReference type="PRINTS" id="PR00297">
    <property type="entry name" value="CHAPERONIN10"/>
</dbReference>
<dbReference type="SMART" id="SM00883">
    <property type="entry name" value="Cpn10"/>
    <property type="match status" value="1"/>
</dbReference>
<dbReference type="SUPFAM" id="SSF50129">
    <property type="entry name" value="GroES-like"/>
    <property type="match status" value="1"/>
</dbReference>
<dbReference type="PROSITE" id="PS00681">
    <property type="entry name" value="CHAPERONINS_CPN10"/>
    <property type="match status" value="1"/>
</dbReference>
<protein>
    <recommendedName>
        <fullName evidence="1">Co-chaperonin GroES</fullName>
    </recommendedName>
    <alternativeName>
        <fullName evidence="1">10 kDa chaperonin</fullName>
    </alternativeName>
    <alternativeName>
        <fullName evidence="1">Chaperonin-10</fullName>
        <shortName evidence="1">Cpn10</shortName>
    </alternativeName>
</protein>
<comment type="function">
    <text evidence="1">Together with the chaperonin GroEL, plays an essential role in assisting protein folding. The GroEL-GroES system forms a nano-cage that allows encapsulation of the non-native substrate proteins and provides a physical environment optimized to promote and accelerate protein folding. GroES binds to the apical surface of the GroEL ring, thereby capping the opening of the GroEL channel.</text>
</comment>
<comment type="subunit">
    <text evidence="1">Heptamer of 7 subunits arranged in a ring. Interacts with the chaperonin GroEL.</text>
</comment>
<comment type="subcellular location">
    <subcellularLocation>
        <location evidence="1">Cytoplasm</location>
    </subcellularLocation>
</comment>
<comment type="similarity">
    <text evidence="1">Belongs to the GroES chaperonin family.</text>
</comment>